<name>CRVP_PSEPO</name>
<dbReference type="EMBL" id="AY072696">
    <property type="protein sequence ID" value="AAL65292.1"/>
    <property type="molecule type" value="mRNA"/>
</dbReference>
<dbReference type="PDB" id="2DDB">
    <property type="method" value="X-ray"/>
    <property type="resolution" value="1.90 A"/>
    <property type="chains" value="A/B/C/D=29-238"/>
</dbReference>
<dbReference type="PDB" id="2EPF">
    <property type="method" value="X-ray"/>
    <property type="resolution" value="2.30 A"/>
    <property type="chains" value="A/B/C/D=29-238"/>
</dbReference>
<dbReference type="PDBsum" id="2DDB"/>
<dbReference type="PDBsum" id="2EPF"/>
<dbReference type="SMR" id="Q8AVA3"/>
<dbReference type="EvolutionaryTrace" id="Q8AVA3"/>
<dbReference type="GO" id="GO:0005576">
    <property type="term" value="C:extracellular region"/>
    <property type="evidence" value="ECO:0007669"/>
    <property type="project" value="UniProtKB-SubCell"/>
</dbReference>
<dbReference type="GO" id="GO:0099106">
    <property type="term" value="F:ion channel regulator activity"/>
    <property type="evidence" value="ECO:0007669"/>
    <property type="project" value="UniProtKB-KW"/>
</dbReference>
<dbReference type="GO" id="GO:0046872">
    <property type="term" value="F:metal ion binding"/>
    <property type="evidence" value="ECO:0007669"/>
    <property type="project" value="UniProtKB-KW"/>
</dbReference>
<dbReference type="GO" id="GO:0090729">
    <property type="term" value="F:toxin activity"/>
    <property type="evidence" value="ECO:0007669"/>
    <property type="project" value="UniProtKB-KW"/>
</dbReference>
<dbReference type="CDD" id="cd05383">
    <property type="entry name" value="CAP_CRISP"/>
    <property type="match status" value="1"/>
</dbReference>
<dbReference type="FunFam" id="1.10.10.740:FF:000001">
    <property type="entry name" value="Cysteine-rich secretory protein 2"/>
    <property type="match status" value="1"/>
</dbReference>
<dbReference type="FunFam" id="3.40.33.10:FF:000005">
    <property type="entry name" value="Cysteine-rich secretory protein 2"/>
    <property type="match status" value="1"/>
</dbReference>
<dbReference type="Gene3D" id="3.40.33.10">
    <property type="entry name" value="CAP"/>
    <property type="match status" value="1"/>
</dbReference>
<dbReference type="Gene3D" id="1.10.10.740">
    <property type="entry name" value="Crisp domain"/>
    <property type="match status" value="1"/>
</dbReference>
<dbReference type="InterPro" id="IPR018244">
    <property type="entry name" value="Allrgn_V5/Tpx1_CS"/>
</dbReference>
<dbReference type="InterPro" id="IPR014044">
    <property type="entry name" value="CAP_dom"/>
</dbReference>
<dbReference type="InterPro" id="IPR035940">
    <property type="entry name" value="CAP_sf"/>
</dbReference>
<dbReference type="InterPro" id="IPR042076">
    <property type="entry name" value="Crisp-like_dom"/>
</dbReference>
<dbReference type="InterPro" id="IPR001283">
    <property type="entry name" value="CRISP-related"/>
</dbReference>
<dbReference type="InterPro" id="IPR013871">
    <property type="entry name" value="Cysteine_rich_secretory"/>
</dbReference>
<dbReference type="InterPro" id="IPR034117">
    <property type="entry name" value="SCP_CRISP"/>
</dbReference>
<dbReference type="InterPro" id="IPR003582">
    <property type="entry name" value="ShKT_dom"/>
</dbReference>
<dbReference type="PANTHER" id="PTHR10334">
    <property type="entry name" value="CYSTEINE-RICH SECRETORY PROTEIN-RELATED"/>
    <property type="match status" value="1"/>
</dbReference>
<dbReference type="Pfam" id="PF00188">
    <property type="entry name" value="CAP"/>
    <property type="match status" value="1"/>
</dbReference>
<dbReference type="Pfam" id="PF08562">
    <property type="entry name" value="Crisp"/>
    <property type="match status" value="1"/>
</dbReference>
<dbReference type="PRINTS" id="PR00837">
    <property type="entry name" value="V5TPXLIKE"/>
</dbReference>
<dbReference type="SMART" id="SM00198">
    <property type="entry name" value="SCP"/>
    <property type="match status" value="1"/>
</dbReference>
<dbReference type="SUPFAM" id="SSF57546">
    <property type="entry name" value="Crisp domain-like"/>
    <property type="match status" value="1"/>
</dbReference>
<dbReference type="SUPFAM" id="SSF55797">
    <property type="entry name" value="PR-1-like"/>
    <property type="match status" value="1"/>
</dbReference>
<dbReference type="PROSITE" id="PS01009">
    <property type="entry name" value="CRISP_1"/>
    <property type="match status" value="1"/>
</dbReference>
<dbReference type="PROSITE" id="PS01010">
    <property type="entry name" value="CRISP_2"/>
    <property type="match status" value="1"/>
</dbReference>
<dbReference type="PROSITE" id="PS51670">
    <property type="entry name" value="SHKT"/>
    <property type="match status" value="1"/>
</dbReference>
<comment type="function">
    <text evidence="3">Blocks olfactory (CNGA2) and retinal (CNGA1) CNG channel currents. Is really less potent that Pseudechetoxin. Does not affect neither depolarization- nor caffeine-induced contraction of smooth muscle.</text>
</comment>
<comment type="subcellular location">
    <subcellularLocation>
        <location evidence="3">Secreted</location>
    </subcellularLocation>
</comment>
<comment type="tissue specificity">
    <text evidence="6">Expressed by the venom gland.</text>
</comment>
<comment type="mass spectrometry" mass="23651.9" error="82.8" method="MALDI" evidence="3"/>
<comment type="similarity">
    <text evidence="5">Belongs to the CRISP family.</text>
</comment>
<reference key="1">
    <citation type="journal article" date="2002" name="Biochemistry">
        <title>Purification and cloning of toxins from elapid venoms that target cyclic nucleotide-gated ion channels.</title>
        <authorList>
            <person name="Yamazaki Y."/>
            <person name="Brown R.L."/>
            <person name="Morita T."/>
        </authorList>
    </citation>
    <scope>NUCLEOTIDE SEQUENCE [MRNA]</scope>
    <scope>PROTEIN SEQUENCE OF 29-34</scope>
    <scope>FUNCTION</scope>
    <scope>MASS SPECTROMETRY</scope>
    <source>
        <tissue>Venom</tissue>
        <tissue>Venom gland</tissue>
    </source>
</reference>
<reference key="2">
    <citation type="journal article" date="2005" name="Acta Crystallogr. F">
        <title>Crystallization and preliminary X-ray diffraction analyses of pseudechetoxin and pseudecin, two snake-venom cysteine-rich secretory proteins that target cyclic nucleotide-gated ion channels.</title>
        <authorList>
            <person name="Suzuki N."/>
            <person name="Yamazaki Y."/>
            <person name="Fujimoto Z."/>
            <person name="Morita T."/>
            <person name="Mizuno H."/>
        </authorList>
    </citation>
    <scope>CRYSTALLIZATION</scope>
</reference>
<reference key="3">
    <citation type="journal article" date="2008" name="Acta Crystallogr. D">
        <title>Structures of pseudechetoxin and pseudecin, two snake-venom cysteine-rich secretory proteins that target cyclic nucleotide-gated ion channels: implications for movement of the C-terminal cysteine-rich domain.</title>
        <authorList>
            <person name="Suzuki N."/>
            <person name="Yamazaki Y."/>
            <person name="Brown R.L."/>
            <person name="Fujimoto Z."/>
            <person name="Morita T."/>
            <person name="Mizuno H."/>
        </authorList>
    </citation>
    <scope>X-RAY CRYSTALLOGRAPHY (1.9 ANGSTROMS) OF 29-238 ALONE AND IN COMPLEX WITH ZINC</scope>
    <scope>ZINC BINDING SITES</scope>
    <scope>DISULFIDE BONDS</scope>
</reference>
<feature type="signal peptide" evidence="1">
    <location>
        <begin position="1"/>
        <end position="19"/>
    </location>
</feature>
<feature type="propeptide" id="PRO_0000006284" evidence="3">
    <location>
        <begin position="20"/>
        <end position="28"/>
    </location>
</feature>
<feature type="chain" id="PRO_0000006285" description="Cysteine-rich venom protein pseudecin" evidence="6">
    <location>
        <begin position="29"/>
        <end position="238"/>
    </location>
</feature>
<feature type="domain" description="SCP">
    <location>
        <begin position="38"/>
        <end position="164"/>
    </location>
</feature>
<feature type="domain" description="ShKT" evidence="2">
    <location>
        <begin position="200"/>
        <end position="233"/>
    </location>
</feature>
<feature type="binding site" evidence="4">
    <location>
        <position position="51"/>
    </location>
    <ligand>
        <name>Zn(2+)</name>
        <dbReference type="ChEBI" id="CHEBI:29105"/>
    </ligand>
</feature>
<feature type="binding site" evidence="4">
    <location>
        <position position="106"/>
    </location>
    <ligand>
        <name>Zn(2+)</name>
        <dbReference type="ChEBI" id="CHEBI:29105"/>
    </ligand>
</feature>
<feature type="disulfide bond" evidence="2 4">
    <location>
        <begin position="75"/>
        <end position="153"/>
    </location>
</feature>
<feature type="disulfide bond" evidence="2 4">
    <location>
        <begin position="92"/>
        <end position="165"/>
    </location>
</feature>
<feature type="disulfide bond" evidence="2 4">
    <location>
        <begin position="148"/>
        <end position="162"/>
    </location>
</feature>
<feature type="disulfide bond" evidence="2 4">
    <location>
        <begin position="184"/>
        <end position="191"/>
    </location>
</feature>
<feature type="disulfide bond" evidence="2 4">
    <location>
        <begin position="187"/>
        <end position="196"/>
    </location>
</feature>
<feature type="disulfide bond" evidence="2 4">
    <location>
        <begin position="200"/>
        <end position="233"/>
    </location>
</feature>
<feature type="disulfide bond" evidence="2 4">
    <location>
        <begin position="209"/>
        <end position="227"/>
    </location>
</feature>
<feature type="disulfide bond" evidence="2 4">
    <location>
        <begin position="218"/>
        <end position="231"/>
    </location>
</feature>
<feature type="helix" evidence="7">
    <location>
        <begin position="33"/>
        <end position="45"/>
    </location>
</feature>
<feature type="strand" evidence="7">
    <location>
        <begin position="52"/>
        <end position="54"/>
    </location>
</feature>
<feature type="helix" evidence="7">
    <location>
        <begin position="62"/>
        <end position="72"/>
    </location>
</feature>
<feature type="turn" evidence="7">
    <location>
        <begin position="73"/>
        <end position="75"/>
    </location>
</feature>
<feature type="helix" evidence="7">
    <location>
        <begin position="82"/>
        <end position="84"/>
    </location>
</feature>
<feature type="strand" evidence="7">
    <location>
        <begin position="85"/>
        <end position="87"/>
    </location>
</feature>
<feature type="strand" evidence="7">
    <location>
        <begin position="93"/>
        <end position="101"/>
    </location>
</feature>
<feature type="helix" evidence="7">
    <location>
        <begin position="105"/>
        <end position="113"/>
    </location>
</feature>
<feature type="helix" evidence="7">
    <location>
        <begin position="114"/>
        <end position="118"/>
    </location>
</feature>
<feature type="turn" evidence="7">
    <location>
        <begin position="121"/>
        <end position="123"/>
    </location>
</feature>
<feature type="strand" evidence="7">
    <location>
        <begin position="124"/>
        <end position="127"/>
    </location>
</feature>
<feature type="helix" evidence="7">
    <location>
        <begin position="133"/>
        <end position="138"/>
    </location>
</feature>
<feature type="strand" evidence="7">
    <location>
        <begin position="145"/>
        <end position="154"/>
    </location>
</feature>
<feature type="strand" evidence="7">
    <location>
        <begin position="157"/>
        <end position="166"/>
    </location>
</feature>
<feature type="strand" evidence="7">
    <location>
        <begin position="168"/>
        <end position="170"/>
    </location>
</feature>
<feature type="strand" evidence="7">
    <location>
        <begin position="180"/>
        <end position="182"/>
    </location>
</feature>
<feature type="turn" evidence="7">
    <location>
        <begin position="183"/>
        <end position="186"/>
    </location>
</feature>
<feature type="strand" evidence="7">
    <location>
        <begin position="190"/>
        <end position="192"/>
    </location>
</feature>
<feature type="helix" evidence="7">
    <location>
        <begin position="209"/>
        <end position="216"/>
    </location>
</feature>
<feature type="helix" evidence="7">
    <location>
        <begin position="221"/>
        <end position="226"/>
    </location>
</feature>
<feature type="helix" evidence="7">
    <location>
        <begin position="228"/>
        <end position="232"/>
    </location>
</feature>
<feature type="strand" evidence="8">
    <location>
        <begin position="234"/>
        <end position="237"/>
    </location>
</feature>
<evidence type="ECO:0000250" key="1"/>
<evidence type="ECO:0000255" key="2">
    <source>
        <dbReference type="PROSITE-ProRule" id="PRU01005"/>
    </source>
</evidence>
<evidence type="ECO:0000269" key="3">
    <source>
    </source>
</evidence>
<evidence type="ECO:0000269" key="4">
    <source>
    </source>
</evidence>
<evidence type="ECO:0000305" key="5"/>
<evidence type="ECO:0000305" key="6">
    <source>
    </source>
</evidence>
<evidence type="ECO:0007829" key="7">
    <source>
        <dbReference type="PDB" id="2DDB"/>
    </source>
</evidence>
<evidence type="ECO:0007829" key="8">
    <source>
        <dbReference type="PDB" id="2EPF"/>
    </source>
</evidence>
<accession>Q8AVA3</accession>
<protein>
    <recommendedName>
        <fullName>Cysteine-rich venom protein pseudecin</fullName>
        <shortName>CRVP Pdc</shortName>
    </recommendedName>
</protein>
<sequence length="238" mass="26452">MIAFIVLLSLAAVLQQSSGTVDFASESSNKKNYQKEIVDKHNALRRSVKPTARNMLQMKWNSHAAQNAKRWADRCTFAHSPPNTRTVGKLRCGENIFMSSQPFPWSGVVQAWYDEIKNFVYGIGAKPPGSVIGHYTQVVWYKSHLIGCASAKCSSSKYLYVCQYCPAGNIRGSIATPYKSGPPCADCPSACVNRLCTNPCNYNNDFSNCKSLAKKSKCQTEWIKKKCPASCFCHNKII</sequence>
<proteinExistence type="evidence at protein level"/>
<organism>
    <name type="scientific">Pseudechis porphyriacus</name>
    <name type="common">Red-bellied black snake</name>
    <dbReference type="NCBI Taxonomy" id="8671"/>
    <lineage>
        <taxon>Eukaryota</taxon>
        <taxon>Metazoa</taxon>
        <taxon>Chordata</taxon>
        <taxon>Craniata</taxon>
        <taxon>Vertebrata</taxon>
        <taxon>Euteleostomi</taxon>
        <taxon>Lepidosauria</taxon>
        <taxon>Squamata</taxon>
        <taxon>Bifurcata</taxon>
        <taxon>Unidentata</taxon>
        <taxon>Episquamata</taxon>
        <taxon>Toxicofera</taxon>
        <taxon>Serpentes</taxon>
        <taxon>Colubroidea</taxon>
        <taxon>Elapidae</taxon>
        <taxon>Hydrophiinae</taxon>
        <taxon>Pseudechis</taxon>
    </lineage>
</organism>
<keyword id="KW-0002">3D-structure</keyword>
<keyword id="KW-0903">Direct protein sequencing</keyword>
<keyword id="KW-1015">Disulfide bond</keyword>
<keyword id="KW-0872">Ion channel impairing toxin</keyword>
<keyword id="KW-0479">Metal-binding</keyword>
<keyword id="KW-0528">Neurotoxin</keyword>
<keyword id="KW-0964">Secreted</keyword>
<keyword id="KW-0732">Signal</keyword>
<keyword id="KW-0800">Toxin</keyword>
<keyword id="KW-0862">Zinc</keyword>